<reference key="1">
    <citation type="submission" date="2007-03" db="EMBL/GenBank/DDBJ databases">
        <title>Sequence analysis of Arabidopsis pumila JS2 chloroplast DNA.</title>
        <authorList>
            <person name="Hosouchi T."/>
            <person name="Tsuruoka H."/>
            <person name="Kotani H."/>
        </authorList>
    </citation>
    <scope>NUCLEOTIDE SEQUENCE [LARGE SCALE GENOMIC DNA]</scope>
</reference>
<keyword id="KW-0150">Chloroplast</keyword>
<keyword id="KW-0934">Plastid</keyword>
<keyword id="KW-0687">Ribonucleoprotein</keyword>
<keyword id="KW-0689">Ribosomal protein</keyword>
<dbReference type="EMBL" id="AP009368">
    <property type="protein sequence ID" value="BAF49980.1"/>
    <property type="molecule type" value="Genomic_DNA"/>
</dbReference>
<dbReference type="EMBL" id="AP009368">
    <property type="protein sequence ID" value="BAF50003.1"/>
    <property type="molecule type" value="Genomic_DNA"/>
</dbReference>
<dbReference type="SMR" id="A4QJX2"/>
<dbReference type="GO" id="GO:0009507">
    <property type="term" value="C:chloroplast"/>
    <property type="evidence" value="ECO:0007669"/>
    <property type="project" value="UniProtKB-SubCell"/>
</dbReference>
<dbReference type="GO" id="GO:0005762">
    <property type="term" value="C:mitochondrial large ribosomal subunit"/>
    <property type="evidence" value="ECO:0007669"/>
    <property type="project" value="TreeGrafter"/>
</dbReference>
<dbReference type="GO" id="GO:0019843">
    <property type="term" value="F:rRNA binding"/>
    <property type="evidence" value="ECO:0007669"/>
    <property type="project" value="UniProtKB-UniRule"/>
</dbReference>
<dbReference type="GO" id="GO:0003735">
    <property type="term" value="F:structural constituent of ribosome"/>
    <property type="evidence" value="ECO:0007669"/>
    <property type="project" value="InterPro"/>
</dbReference>
<dbReference type="GO" id="GO:0016740">
    <property type="term" value="F:transferase activity"/>
    <property type="evidence" value="ECO:0007669"/>
    <property type="project" value="InterPro"/>
</dbReference>
<dbReference type="GO" id="GO:0032543">
    <property type="term" value="P:mitochondrial translation"/>
    <property type="evidence" value="ECO:0007669"/>
    <property type="project" value="TreeGrafter"/>
</dbReference>
<dbReference type="FunFam" id="4.10.950.10:FF:000001">
    <property type="entry name" value="50S ribosomal protein L2"/>
    <property type="match status" value="1"/>
</dbReference>
<dbReference type="FunFam" id="2.30.30.30:FF:000008">
    <property type="entry name" value="50S ribosomal protein L2, chloroplastic"/>
    <property type="match status" value="1"/>
</dbReference>
<dbReference type="FunFam" id="2.40.50.140:FF:000029">
    <property type="entry name" value="50S ribosomal protein L2, chloroplastic"/>
    <property type="match status" value="1"/>
</dbReference>
<dbReference type="Gene3D" id="2.30.30.30">
    <property type="match status" value="1"/>
</dbReference>
<dbReference type="Gene3D" id="2.40.50.140">
    <property type="entry name" value="Nucleic acid-binding proteins"/>
    <property type="match status" value="1"/>
</dbReference>
<dbReference type="Gene3D" id="4.10.950.10">
    <property type="entry name" value="Ribosomal protein L2, domain 3"/>
    <property type="match status" value="1"/>
</dbReference>
<dbReference type="HAMAP" id="MF_01320_B">
    <property type="entry name" value="Ribosomal_uL2_B"/>
    <property type="match status" value="1"/>
</dbReference>
<dbReference type="InterPro" id="IPR012340">
    <property type="entry name" value="NA-bd_OB-fold"/>
</dbReference>
<dbReference type="InterPro" id="IPR014722">
    <property type="entry name" value="Rib_uL2_dom2"/>
</dbReference>
<dbReference type="InterPro" id="IPR002171">
    <property type="entry name" value="Ribosomal_uL2"/>
</dbReference>
<dbReference type="InterPro" id="IPR005880">
    <property type="entry name" value="Ribosomal_uL2_bac/org-type"/>
</dbReference>
<dbReference type="InterPro" id="IPR022669">
    <property type="entry name" value="Ribosomal_uL2_C"/>
</dbReference>
<dbReference type="InterPro" id="IPR022671">
    <property type="entry name" value="Ribosomal_uL2_CS"/>
</dbReference>
<dbReference type="InterPro" id="IPR014726">
    <property type="entry name" value="Ribosomal_uL2_dom3"/>
</dbReference>
<dbReference type="InterPro" id="IPR022666">
    <property type="entry name" value="Ribosomal_uL2_RNA-bd_dom"/>
</dbReference>
<dbReference type="InterPro" id="IPR008991">
    <property type="entry name" value="Translation_prot_SH3-like_sf"/>
</dbReference>
<dbReference type="NCBIfam" id="TIGR01171">
    <property type="entry name" value="rplB_bact"/>
    <property type="match status" value="1"/>
</dbReference>
<dbReference type="PANTHER" id="PTHR13691:SF5">
    <property type="entry name" value="LARGE RIBOSOMAL SUBUNIT PROTEIN UL2M"/>
    <property type="match status" value="1"/>
</dbReference>
<dbReference type="PANTHER" id="PTHR13691">
    <property type="entry name" value="RIBOSOMAL PROTEIN L2"/>
    <property type="match status" value="1"/>
</dbReference>
<dbReference type="Pfam" id="PF00181">
    <property type="entry name" value="Ribosomal_L2"/>
    <property type="match status" value="1"/>
</dbReference>
<dbReference type="Pfam" id="PF03947">
    <property type="entry name" value="Ribosomal_L2_C"/>
    <property type="match status" value="1"/>
</dbReference>
<dbReference type="PIRSF" id="PIRSF002158">
    <property type="entry name" value="Ribosomal_L2"/>
    <property type="match status" value="1"/>
</dbReference>
<dbReference type="SMART" id="SM01383">
    <property type="entry name" value="Ribosomal_L2"/>
    <property type="match status" value="1"/>
</dbReference>
<dbReference type="SMART" id="SM01382">
    <property type="entry name" value="Ribosomal_L2_C"/>
    <property type="match status" value="1"/>
</dbReference>
<dbReference type="SUPFAM" id="SSF50249">
    <property type="entry name" value="Nucleic acid-binding proteins"/>
    <property type="match status" value="1"/>
</dbReference>
<dbReference type="SUPFAM" id="SSF50104">
    <property type="entry name" value="Translation proteins SH3-like domain"/>
    <property type="match status" value="1"/>
</dbReference>
<dbReference type="PROSITE" id="PS00467">
    <property type="entry name" value="RIBOSOMAL_L2"/>
    <property type="match status" value="1"/>
</dbReference>
<evidence type="ECO:0000250" key="1"/>
<evidence type="ECO:0000255" key="2">
    <source>
        <dbReference type="HAMAP-Rule" id="MF_01320"/>
    </source>
</evidence>
<evidence type="ECO:0000256" key="3">
    <source>
        <dbReference type="SAM" id="MobiDB-lite"/>
    </source>
</evidence>
<evidence type="ECO:0000305" key="4"/>
<accession>A4QJX2</accession>
<gene>
    <name type="primary">rpl2-A</name>
</gene>
<gene>
    <name type="primary">rpl2-B</name>
</gene>
<organism>
    <name type="scientific">Olimarabidopsis pumila</name>
    <name type="common">Dwarf rocket</name>
    <name type="synonym">Arabidopsis griffithiana</name>
    <dbReference type="NCBI Taxonomy" id="74718"/>
    <lineage>
        <taxon>Eukaryota</taxon>
        <taxon>Viridiplantae</taxon>
        <taxon>Streptophyta</taxon>
        <taxon>Embryophyta</taxon>
        <taxon>Tracheophyta</taxon>
        <taxon>Spermatophyta</taxon>
        <taxon>Magnoliopsida</taxon>
        <taxon>eudicotyledons</taxon>
        <taxon>Gunneridae</taxon>
        <taxon>Pentapetalae</taxon>
        <taxon>rosids</taxon>
        <taxon>malvids</taxon>
        <taxon>Brassicales</taxon>
        <taxon>Brassicaceae</taxon>
        <taxon>Alyssopsideae</taxon>
        <taxon>Olimarabidopsis</taxon>
    </lineage>
</organism>
<protein>
    <recommendedName>
        <fullName evidence="2">Large ribosomal subunit protein uL2cz/uL2cy</fullName>
    </recommendedName>
    <alternativeName>
        <fullName evidence="4">50S ribosomal protein L2, chloroplastic</fullName>
    </alternativeName>
</protein>
<name>RK2_OLIPU</name>
<sequence>MAIHLYKTSTPSTRNGAVDSQVKSNPRNNLICGQHHCGKGRNARGIITARHRGGGHKRLYRKIDFRRNAKDIYGRIVTIEYDPNRNAYICLIHYGDGEKRYILHPRGAIIGDTIVSGTEVPIKMGNALPLTDMPLGTAIHNIEITLGKGGQLARAAGAVAKLIAKEGKSATLKLPSGEVRLISKNCSATVGQVGNVGVNQKSLGRAGSKRWLGKRPVVRGVVMNPVDHPHGGGEGRAPIGRKKPVTPWGYPALGRRTRKRKKYSETLILRRRSK</sequence>
<comment type="subunit">
    <text evidence="1">Part of the 50S ribosomal subunit.</text>
</comment>
<comment type="subcellular location">
    <subcellularLocation>
        <location>Plastid</location>
        <location>Chloroplast</location>
    </subcellularLocation>
</comment>
<comment type="similarity">
    <text evidence="4">Belongs to the universal ribosomal protein uL2 family.</text>
</comment>
<feature type="chain" id="PRO_0000310084" description="Large ribosomal subunit protein uL2cz/uL2cy">
    <location>
        <begin position="1"/>
        <end position="274"/>
    </location>
</feature>
<feature type="region of interest" description="Disordered" evidence="3">
    <location>
        <begin position="1"/>
        <end position="21"/>
    </location>
</feature>
<feature type="region of interest" description="Disordered" evidence="3">
    <location>
        <begin position="224"/>
        <end position="252"/>
    </location>
</feature>
<proteinExistence type="inferred from homology"/>
<geneLocation type="chloroplast"/>